<feature type="chain" id="PRO_1000056022" description="Large ribosomal subunit protein uL30">
    <location>
        <begin position="1"/>
        <end position="60"/>
    </location>
</feature>
<protein>
    <recommendedName>
        <fullName evidence="1">Large ribosomal subunit protein uL30</fullName>
    </recommendedName>
    <alternativeName>
        <fullName evidence="2">50S ribosomal protein L30</fullName>
    </alternativeName>
</protein>
<proteinExistence type="inferred from homology"/>
<comment type="subunit">
    <text evidence="1">Part of the 50S ribosomal subunit.</text>
</comment>
<comment type="similarity">
    <text evidence="1">Belongs to the universal ribosomal protein uL30 family.</text>
</comment>
<name>RL30_BURP6</name>
<keyword id="KW-0687">Ribonucleoprotein</keyword>
<keyword id="KW-0689">Ribosomal protein</keyword>
<sequence length="60" mass="6621">MSEKTVKVQLVKSLIGTRESHRATVRGLGLRRLNSVSELQDTPAVRGMINKVSYLVKVIG</sequence>
<reference key="1">
    <citation type="journal article" date="2010" name="Genome Biol. Evol.">
        <title>Continuing evolution of Burkholderia mallei through genome reduction and large-scale rearrangements.</title>
        <authorList>
            <person name="Losada L."/>
            <person name="Ronning C.M."/>
            <person name="DeShazer D."/>
            <person name="Woods D."/>
            <person name="Fedorova N."/>
            <person name="Kim H.S."/>
            <person name="Shabalina S.A."/>
            <person name="Pearson T.R."/>
            <person name="Brinkac L."/>
            <person name="Tan P."/>
            <person name="Nandi T."/>
            <person name="Crabtree J."/>
            <person name="Badger J."/>
            <person name="Beckstrom-Sternberg S."/>
            <person name="Saqib M."/>
            <person name="Schutzer S.E."/>
            <person name="Keim P."/>
            <person name="Nierman W.C."/>
        </authorList>
    </citation>
    <scope>NUCLEOTIDE SEQUENCE [LARGE SCALE GENOMIC DNA]</scope>
    <source>
        <strain>668</strain>
    </source>
</reference>
<accession>A3NEG1</accession>
<evidence type="ECO:0000255" key="1">
    <source>
        <dbReference type="HAMAP-Rule" id="MF_01371"/>
    </source>
</evidence>
<evidence type="ECO:0000305" key="2"/>
<gene>
    <name evidence="1" type="primary">rpmD</name>
    <name type="ordered locus">BURPS668_3728</name>
</gene>
<dbReference type="EMBL" id="CP000570">
    <property type="protein sequence ID" value="ABN82254.1"/>
    <property type="molecule type" value="Genomic_DNA"/>
</dbReference>
<dbReference type="RefSeq" id="WP_004202755.1">
    <property type="nucleotide sequence ID" value="NC_009074.1"/>
</dbReference>
<dbReference type="SMR" id="A3NEG1"/>
<dbReference type="GeneID" id="93061814"/>
<dbReference type="KEGG" id="bpd:BURPS668_3728"/>
<dbReference type="HOGENOM" id="CLU_131047_1_4_4"/>
<dbReference type="GO" id="GO:0022625">
    <property type="term" value="C:cytosolic large ribosomal subunit"/>
    <property type="evidence" value="ECO:0007669"/>
    <property type="project" value="TreeGrafter"/>
</dbReference>
<dbReference type="GO" id="GO:0003735">
    <property type="term" value="F:structural constituent of ribosome"/>
    <property type="evidence" value="ECO:0007669"/>
    <property type="project" value="InterPro"/>
</dbReference>
<dbReference type="GO" id="GO:0006412">
    <property type="term" value="P:translation"/>
    <property type="evidence" value="ECO:0007669"/>
    <property type="project" value="UniProtKB-UniRule"/>
</dbReference>
<dbReference type="CDD" id="cd01658">
    <property type="entry name" value="Ribosomal_L30"/>
    <property type="match status" value="1"/>
</dbReference>
<dbReference type="FunFam" id="3.30.1390.20:FF:000001">
    <property type="entry name" value="50S ribosomal protein L30"/>
    <property type="match status" value="1"/>
</dbReference>
<dbReference type="Gene3D" id="3.30.1390.20">
    <property type="entry name" value="Ribosomal protein L30, ferredoxin-like fold domain"/>
    <property type="match status" value="1"/>
</dbReference>
<dbReference type="HAMAP" id="MF_01371_B">
    <property type="entry name" value="Ribosomal_uL30_B"/>
    <property type="match status" value="1"/>
</dbReference>
<dbReference type="InterPro" id="IPR036919">
    <property type="entry name" value="Ribo_uL30_ferredoxin-like_sf"/>
</dbReference>
<dbReference type="InterPro" id="IPR005996">
    <property type="entry name" value="Ribosomal_uL30_bac-type"/>
</dbReference>
<dbReference type="InterPro" id="IPR016082">
    <property type="entry name" value="Ribosomal_uL30_ferredoxin-like"/>
</dbReference>
<dbReference type="NCBIfam" id="TIGR01308">
    <property type="entry name" value="rpmD_bact"/>
    <property type="match status" value="1"/>
</dbReference>
<dbReference type="PANTHER" id="PTHR15892:SF2">
    <property type="entry name" value="LARGE RIBOSOMAL SUBUNIT PROTEIN UL30M"/>
    <property type="match status" value="1"/>
</dbReference>
<dbReference type="PANTHER" id="PTHR15892">
    <property type="entry name" value="MITOCHONDRIAL RIBOSOMAL PROTEIN L30"/>
    <property type="match status" value="1"/>
</dbReference>
<dbReference type="Pfam" id="PF00327">
    <property type="entry name" value="Ribosomal_L30"/>
    <property type="match status" value="1"/>
</dbReference>
<dbReference type="PIRSF" id="PIRSF002211">
    <property type="entry name" value="Ribosomal_L30_bac-type"/>
    <property type="match status" value="1"/>
</dbReference>
<dbReference type="SUPFAM" id="SSF55129">
    <property type="entry name" value="Ribosomal protein L30p/L7e"/>
    <property type="match status" value="1"/>
</dbReference>
<organism>
    <name type="scientific">Burkholderia pseudomallei (strain 668)</name>
    <dbReference type="NCBI Taxonomy" id="320373"/>
    <lineage>
        <taxon>Bacteria</taxon>
        <taxon>Pseudomonadati</taxon>
        <taxon>Pseudomonadota</taxon>
        <taxon>Betaproteobacteria</taxon>
        <taxon>Burkholderiales</taxon>
        <taxon>Burkholderiaceae</taxon>
        <taxon>Burkholderia</taxon>
        <taxon>pseudomallei group</taxon>
    </lineage>
</organism>